<organism>
    <name type="scientific">Octodontomys gliroides</name>
    <name type="common">Mountain degu</name>
    <dbReference type="NCBI Taxonomy" id="170740"/>
    <lineage>
        <taxon>Eukaryota</taxon>
        <taxon>Metazoa</taxon>
        <taxon>Chordata</taxon>
        <taxon>Craniata</taxon>
        <taxon>Vertebrata</taxon>
        <taxon>Euteleostomi</taxon>
        <taxon>Mammalia</taxon>
        <taxon>Eutheria</taxon>
        <taxon>Euarchontoglires</taxon>
        <taxon>Glires</taxon>
        <taxon>Rodentia</taxon>
        <taxon>Hystricomorpha</taxon>
        <taxon>Ctenomyidae</taxon>
        <taxon>Octodontomys</taxon>
    </lineage>
</organism>
<dbReference type="EMBL" id="AF370706">
    <property type="protein sequence ID" value="AAL01870.1"/>
    <property type="molecule type" value="Genomic_DNA"/>
</dbReference>
<dbReference type="SMR" id="Q94WW5"/>
<dbReference type="GO" id="GO:0005743">
    <property type="term" value="C:mitochondrial inner membrane"/>
    <property type="evidence" value="ECO:0007669"/>
    <property type="project" value="UniProtKB-SubCell"/>
</dbReference>
<dbReference type="GO" id="GO:0045275">
    <property type="term" value="C:respiratory chain complex III"/>
    <property type="evidence" value="ECO:0007669"/>
    <property type="project" value="InterPro"/>
</dbReference>
<dbReference type="GO" id="GO:0046872">
    <property type="term" value="F:metal ion binding"/>
    <property type="evidence" value="ECO:0007669"/>
    <property type="project" value="UniProtKB-KW"/>
</dbReference>
<dbReference type="GO" id="GO:0008121">
    <property type="term" value="F:ubiquinol-cytochrome-c reductase activity"/>
    <property type="evidence" value="ECO:0007669"/>
    <property type="project" value="InterPro"/>
</dbReference>
<dbReference type="GO" id="GO:0006122">
    <property type="term" value="P:mitochondrial electron transport, ubiquinol to cytochrome c"/>
    <property type="evidence" value="ECO:0007669"/>
    <property type="project" value="TreeGrafter"/>
</dbReference>
<dbReference type="CDD" id="cd00290">
    <property type="entry name" value="cytochrome_b_C"/>
    <property type="match status" value="1"/>
</dbReference>
<dbReference type="CDD" id="cd00284">
    <property type="entry name" value="Cytochrome_b_N"/>
    <property type="match status" value="1"/>
</dbReference>
<dbReference type="FunFam" id="1.20.810.10:FF:000002">
    <property type="entry name" value="Cytochrome b"/>
    <property type="match status" value="1"/>
</dbReference>
<dbReference type="Gene3D" id="1.20.810.10">
    <property type="entry name" value="Cytochrome Bc1 Complex, Chain C"/>
    <property type="match status" value="1"/>
</dbReference>
<dbReference type="InterPro" id="IPR005798">
    <property type="entry name" value="Cyt_b/b6_C"/>
</dbReference>
<dbReference type="InterPro" id="IPR036150">
    <property type="entry name" value="Cyt_b/b6_C_sf"/>
</dbReference>
<dbReference type="InterPro" id="IPR005797">
    <property type="entry name" value="Cyt_b/b6_N"/>
</dbReference>
<dbReference type="InterPro" id="IPR027387">
    <property type="entry name" value="Cytb/b6-like_sf"/>
</dbReference>
<dbReference type="InterPro" id="IPR030689">
    <property type="entry name" value="Cytochrome_b"/>
</dbReference>
<dbReference type="InterPro" id="IPR048260">
    <property type="entry name" value="Cytochrome_b_C_euk/bac"/>
</dbReference>
<dbReference type="InterPro" id="IPR048259">
    <property type="entry name" value="Cytochrome_b_N_euk/bac"/>
</dbReference>
<dbReference type="InterPro" id="IPR016174">
    <property type="entry name" value="Di-haem_cyt_TM"/>
</dbReference>
<dbReference type="PANTHER" id="PTHR19271">
    <property type="entry name" value="CYTOCHROME B"/>
    <property type="match status" value="1"/>
</dbReference>
<dbReference type="PANTHER" id="PTHR19271:SF16">
    <property type="entry name" value="CYTOCHROME B"/>
    <property type="match status" value="1"/>
</dbReference>
<dbReference type="Pfam" id="PF00032">
    <property type="entry name" value="Cytochrom_B_C"/>
    <property type="match status" value="1"/>
</dbReference>
<dbReference type="Pfam" id="PF00033">
    <property type="entry name" value="Cytochrome_B"/>
    <property type="match status" value="1"/>
</dbReference>
<dbReference type="PIRSF" id="PIRSF038885">
    <property type="entry name" value="COB"/>
    <property type="match status" value="1"/>
</dbReference>
<dbReference type="SUPFAM" id="SSF81648">
    <property type="entry name" value="a domain/subunit of cytochrome bc1 complex (Ubiquinol-cytochrome c reductase)"/>
    <property type="match status" value="1"/>
</dbReference>
<dbReference type="SUPFAM" id="SSF81342">
    <property type="entry name" value="Transmembrane di-heme cytochromes"/>
    <property type="match status" value="1"/>
</dbReference>
<dbReference type="PROSITE" id="PS51003">
    <property type="entry name" value="CYTB_CTER"/>
    <property type="match status" value="1"/>
</dbReference>
<dbReference type="PROSITE" id="PS51002">
    <property type="entry name" value="CYTB_NTER"/>
    <property type="match status" value="1"/>
</dbReference>
<name>CYB_OCTGL</name>
<sequence length="379" mass="43021">MTNIRKSHPLIKIINHSFIDLPAPSNISAWWNFGSLLGVCLMLQIITGLFLAMHYTADTTTAFSSVTHICRDVNYGWLIRYLHANGASMFFIFLYLHIGRGIYYGSFTFMETWNIGVLLLFAVMATAFMGYVLPWGQMSFWGATVITNLLSAIPYIGPNLVEWIWGGFSVDKATLTRFFAFHFILPFIITAMVMIHLLFLHETGSNNPSGLNSDSDKIPFHPYYTIKDILGLLFMVLTLMTLVLFSPDLLGDPDNYTPANPLNTPPHIKPEWYFLFAYAILRSIPNKLGGVLALVFSILILMLFPLLQMSKQRSMSFRPLSQCLLWVLVANLIILTWIGGQPVEHPFIMIGQLASVIYFSIILIFMPIISLMENKLLKW</sequence>
<gene>
    <name type="primary">MT-CYB</name>
    <name type="synonym">COB</name>
    <name type="synonym">CYTB</name>
    <name type="synonym">MTCYB</name>
</gene>
<feature type="chain" id="PRO_0000255103" description="Cytochrome b">
    <location>
        <begin position="1"/>
        <end position="379"/>
    </location>
</feature>
<feature type="transmembrane region" description="Helical" evidence="2">
    <location>
        <begin position="33"/>
        <end position="53"/>
    </location>
</feature>
<feature type="transmembrane region" description="Helical" evidence="2">
    <location>
        <begin position="77"/>
        <end position="98"/>
    </location>
</feature>
<feature type="transmembrane region" description="Helical" evidence="2">
    <location>
        <begin position="113"/>
        <end position="133"/>
    </location>
</feature>
<feature type="transmembrane region" description="Helical" evidence="2">
    <location>
        <begin position="178"/>
        <end position="198"/>
    </location>
</feature>
<feature type="transmembrane region" description="Helical" evidence="2">
    <location>
        <begin position="226"/>
        <end position="246"/>
    </location>
</feature>
<feature type="transmembrane region" description="Helical" evidence="2">
    <location>
        <begin position="288"/>
        <end position="308"/>
    </location>
</feature>
<feature type="transmembrane region" description="Helical" evidence="2">
    <location>
        <begin position="320"/>
        <end position="340"/>
    </location>
</feature>
<feature type="transmembrane region" description="Helical" evidence="2">
    <location>
        <begin position="347"/>
        <end position="367"/>
    </location>
</feature>
<feature type="binding site" description="axial binding residue" evidence="2">
    <location>
        <position position="83"/>
    </location>
    <ligand>
        <name>heme b</name>
        <dbReference type="ChEBI" id="CHEBI:60344"/>
        <label>b562</label>
    </ligand>
    <ligandPart>
        <name>Fe</name>
        <dbReference type="ChEBI" id="CHEBI:18248"/>
    </ligandPart>
</feature>
<feature type="binding site" description="axial binding residue" evidence="2">
    <location>
        <position position="97"/>
    </location>
    <ligand>
        <name>heme b</name>
        <dbReference type="ChEBI" id="CHEBI:60344"/>
        <label>b566</label>
    </ligand>
    <ligandPart>
        <name>Fe</name>
        <dbReference type="ChEBI" id="CHEBI:18248"/>
    </ligandPart>
</feature>
<feature type="binding site" description="axial binding residue" evidence="2">
    <location>
        <position position="182"/>
    </location>
    <ligand>
        <name>heme b</name>
        <dbReference type="ChEBI" id="CHEBI:60344"/>
        <label>b562</label>
    </ligand>
    <ligandPart>
        <name>Fe</name>
        <dbReference type="ChEBI" id="CHEBI:18248"/>
    </ligandPart>
</feature>
<feature type="binding site" description="axial binding residue" evidence="2">
    <location>
        <position position="196"/>
    </location>
    <ligand>
        <name>heme b</name>
        <dbReference type="ChEBI" id="CHEBI:60344"/>
        <label>b566</label>
    </ligand>
    <ligandPart>
        <name>Fe</name>
        <dbReference type="ChEBI" id="CHEBI:18248"/>
    </ligandPart>
</feature>
<feature type="binding site" evidence="2">
    <location>
        <position position="201"/>
    </location>
    <ligand>
        <name>a ubiquinone</name>
        <dbReference type="ChEBI" id="CHEBI:16389"/>
    </ligand>
</feature>
<evidence type="ECO:0000250" key="1"/>
<evidence type="ECO:0000250" key="2">
    <source>
        <dbReference type="UniProtKB" id="P00157"/>
    </source>
</evidence>
<evidence type="ECO:0000255" key="3">
    <source>
        <dbReference type="PROSITE-ProRule" id="PRU00967"/>
    </source>
</evidence>
<evidence type="ECO:0000255" key="4">
    <source>
        <dbReference type="PROSITE-ProRule" id="PRU00968"/>
    </source>
</evidence>
<geneLocation type="mitochondrion"/>
<proteinExistence type="inferred from homology"/>
<protein>
    <recommendedName>
        <fullName>Cytochrome b</fullName>
    </recommendedName>
    <alternativeName>
        <fullName>Complex III subunit 3</fullName>
    </alternativeName>
    <alternativeName>
        <fullName>Complex III subunit III</fullName>
    </alternativeName>
    <alternativeName>
        <fullName>Cytochrome b-c1 complex subunit 3</fullName>
    </alternativeName>
    <alternativeName>
        <fullName>Ubiquinol-cytochrome-c reductase complex cytochrome b subunit</fullName>
    </alternativeName>
</protein>
<accession>Q94WW5</accession>
<comment type="function">
    <text evidence="2">Component of the ubiquinol-cytochrome c reductase complex (complex III or cytochrome b-c1 complex) that is part of the mitochondrial respiratory chain. The b-c1 complex mediates electron transfer from ubiquinol to cytochrome c. Contributes to the generation of a proton gradient across the mitochondrial membrane that is then used for ATP synthesis.</text>
</comment>
<comment type="cofactor">
    <cofactor evidence="2">
        <name>heme b</name>
        <dbReference type="ChEBI" id="CHEBI:60344"/>
    </cofactor>
    <text evidence="2">Binds 2 heme b groups non-covalently.</text>
</comment>
<comment type="subunit">
    <text evidence="2">The cytochrome bc1 complex contains 11 subunits: 3 respiratory subunits (MT-CYB, CYC1 and UQCRFS1), 2 core proteins (UQCRC1 and UQCRC2) and 6 low-molecular weight proteins (UQCRH/QCR6, UQCRB/QCR7, UQCRQ/QCR8, UQCR10/QCR9, UQCR11/QCR10 and a cleavage product of UQCRFS1). This cytochrome bc1 complex then forms a dimer.</text>
</comment>
<comment type="subcellular location">
    <subcellularLocation>
        <location evidence="2">Mitochondrion inner membrane</location>
        <topology evidence="2">Multi-pass membrane protein</topology>
    </subcellularLocation>
</comment>
<comment type="miscellaneous">
    <text evidence="1">Heme 1 (or BL or b562) is low-potential and absorbs at about 562 nm, and heme 2 (or BH or b566) is high-potential and absorbs at about 566 nm.</text>
</comment>
<comment type="similarity">
    <text evidence="3 4">Belongs to the cytochrome b family.</text>
</comment>
<comment type="caution">
    <text evidence="2">The full-length protein contains only eight transmembrane helices, not nine as predicted by bioinformatics tools.</text>
</comment>
<reference key="1">
    <citation type="journal article" date="2001" name="Mol. Biol. Evol.">
        <title>Recurrent amplifications and deletions of satellite DNA accompanied chromosomal diversification in South American tuco-tucos (genus Ctenomys, Rodentia: Octodontidae): a phylogenetic approach.</title>
        <authorList>
            <person name="Slamovits C.H."/>
            <person name="Cook J.A."/>
            <person name="Lessa E.P."/>
            <person name="Rossi M.S."/>
        </authorList>
    </citation>
    <scope>NUCLEOTIDE SEQUENCE [GENOMIC DNA]</scope>
</reference>
<keyword id="KW-0249">Electron transport</keyword>
<keyword id="KW-0349">Heme</keyword>
<keyword id="KW-0408">Iron</keyword>
<keyword id="KW-0472">Membrane</keyword>
<keyword id="KW-0479">Metal-binding</keyword>
<keyword id="KW-0496">Mitochondrion</keyword>
<keyword id="KW-0999">Mitochondrion inner membrane</keyword>
<keyword id="KW-0679">Respiratory chain</keyword>
<keyword id="KW-0812">Transmembrane</keyword>
<keyword id="KW-1133">Transmembrane helix</keyword>
<keyword id="KW-0813">Transport</keyword>
<keyword id="KW-0830">Ubiquinone</keyword>